<organism>
    <name type="scientific">Schizosaccharomyces pombe (strain 972 / ATCC 24843)</name>
    <name type="common">Fission yeast</name>
    <dbReference type="NCBI Taxonomy" id="284812"/>
    <lineage>
        <taxon>Eukaryota</taxon>
        <taxon>Fungi</taxon>
        <taxon>Dikarya</taxon>
        <taxon>Ascomycota</taxon>
        <taxon>Taphrinomycotina</taxon>
        <taxon>Schizosaccharomycetes</taxon>
        <taxon>Schizosaccharomycetales</taxon>
        <taxon>Schizosaccharomycetaceae</taxon>
        <taxon>Schizosaccharomyces</taxon>
    </lineage>
</organism>
<proteinExistence type="inferred from homology"/>
<feature type="chain" id="PRO_0000352816" description="Exosome complex component rrp40">
    <location>
        <begin position="1"/>
        <end position="240"/>
    </location>
</feature>
<feature type="domain" description="S1 motif">
    <location>
        <begin position="75"/>
        <end position="144"/>
    </location>
</feature>
<name>RRP40_SCHPO</name>
<gene>
    <name type="primary">rrp40</name>
    <name type="ORF">SPAC22A12.12c</name>
</gene>
<evidence type="ECO:0000250" key="1"/>
<evidence type="ECO:0000250" key="2">
    <source>
        <dbReference type="UniProtKB" id="Q08285"/>
    </source>
</evidence>
<evidence type="ECO:0000305" key="3"/>
<comment type="function">
    <text evidence="2">Non-catalytic component of the RNA exosome complex which has 3'-&gt;5' exoribonuclease activity and participates in a multitude of cellular RNA processing and degradation events. In the nucleus, the RNA exosome complex is involved in proper maturation of stable RNA species such as rRNA, snRNA and snoRNA, in the elimination of RNA processing by-products and non-coding 'pervasive' transcripts, such as antisense RNA species and cryptic unstable transcripts (CUTs), and of mRNAs with processing defects, thereby limiting or excluding their export to the cytoplasm. In the cytoplasm, the RNA exosome complex is involved in general mRNA turnover and in RNA surveillance pathways, preventing translation of aberrant mRNAs. The catalytic inactive RNA exosome core complex of 9 subunits (Exo-9) is proposed to play a pivotal role in the binding and presentation of RNA for ribonucleolysis, and to serve as a scaffold for the association with catalytic subunits and accessory proteins or complexes. rrp40 as peripheral part of the Exo-9 complex is thought to stabilize the hexameric ring of RNase PH-domain subunits (By similarity).</text>
</comment>
<comment type="subunit">
    <text evidence="2">Component of the RNA exosome complex. Specifically part of the catalytically inactive RNA exosome core complex (Exo-9) which may associate with the catalytic subunits rrp6 and dis3 in cytoplasmic- and nuclear-specific RNA exosome complex forms. Exo-9 is formed by a hexameric base ring of RNase PH domain-containing subunits and a cap ring consisting of csl4, rrp4 and rrp40.</text>
</comment>
<comment type="subcellular location">
    <subcellularLocation>
        <location evidence="1">Cytoplasm</location>
    </subcellularLocation>
    <subcellularLocation>
        <location evidence="2">Nucleus</location>
        <location evidence="2">Nucleolus</location>
    </subcellularLocation>
</comment>
<comment type="similarity">
    <text evidence="3">Belongs to the RRP40 family.</text>
</comment>
<sequence length="240" mass="26726">MAEVEEKGLLSYYFPGERIPDSIISQDGSIRLGPGLVFQKKDREEEIVVSKAGRLHQTGKNAMLIDSRTKRYIPATNDQVIGQIISRFAEGYRVDIGSAHIAQLNALAFENVTRKSRPNLNVGSLVYARVSLADRDMEPELECFDATTGKAAGYGELKNGYMITGLSLSHCRKLILPKNTLLQTLGSYIPFEIAVGMNGRVWVNSENLSTTVLICTAIRNCEFMSDEEQIKYCKDLIKKL</sequence>
<accession>O13903</accession>
<dbReference type="EMBL" id="CU329670">
    <property type="protein sequence ID" value="CAB16582.1"/>
    <property type="molecule type" value="Genomic_DNA"/>
</dbReference>
<dbReference type="PIR" id="T38152">
    <property type="entry name" value="T38152"/>
</dbReference>
<dbReference type="RefSeq" id="NP_593242.1">
    <property type="nucleotide sequence ID" value="NM_001018639.2"/>
</dbReference>
<dbReference type="SMR" id="O13903"/>
<dbReference type="BioGRID" id="278328">
    <property type="interactions" value="6"/>
</dbReference>
<dbReference type="ComplexPortal" id="CPX-8914">
    <property type="entry name" value="Nucleolar exosome complex"/>
</dbReference>
<dbReference type="FunCoup" id="O13903">
    <property type="interactions" value="446"/>
</dbReference>
<dbReference type="STRING" id="284812.O13903"/>
<dbReference type="PaxDb" id="4896-SPAC22A12.12c.1"/>
<dbReference type="EnsemblFungi" id="SPAC22A12.12c.1">
    <property type="protein sequence ID" value="SPAC22A12.12c.1:pep"/>
    <property type="gene ID" value="SPAC22A12.12c"/>
</dbReference>
<dbReference type="GeneID" id="2541837"/>
<dbReference type="KEGG" id="spo:2541837"/>
<dbReference type="PomBase" id="SPAC22A12.12c">
    <property type="gene designation" value="rrp40"/>
</dbReference>
<dbReference type="VEuPathDB" id="FungiDB:SPAC22A12.12c"/>
<dbReference type="eggNOG" id="KOG1004">
    <property type="taxonomic scope" value="Eukaryota"/>
</dbReference>
<dbReference type="HOGENOM" id="CLU_069847_5_1_1"/>
<dbReference type="InParanoid" id="O13903"/>
<dbReference type="OMA" id="WIKGINV"/>
<dbReference type="PhylomeDB" id="O13903"/>
<dbReference type="Reactome" id="R-SPO-429958">
    <property type="pathway name" value="mRNA decay by 3' to 5' exoribonuclease"/>
</dbReference>
<dbReference type="Reactome" id="R-SPO-6791226">
    <property type="pathway name" value="Major pathway of rRNA processing in the nucleolus and cytosol"/>
</dbReference>
<dbReference type="PRO" id="PR:O13903"/>
<dbReference type="Proteomes" id="UP000002485">
    <property type="component" value="Chromosome I"/>
</dbReference>
<dbReference type="GO" id="GO:0000177">
    <property type="term" value="C:cytoplasmic exosome (RNase complex)"/>
    <property type="evidence" value="ECO:0000318"/>
    <property type="project" value="GO_Central"/>
</dbReference>
<dbReference type="GO" id="GO:0000178">
    <property type="term" value="C:exosome (RNase complex)"/>
    <property type="evidence" value="ECO:0000314"/>
    <property type="project" value="PomBase"/>
</dbReference>
<dbReference type="GO" id="GO:0000176">
    <property type="term" value="C:nuclear exosome (RNase complex)"/>
    <property type="evidence" value="ECO:0000269"/>
    <property type="project" value="PomBase"/>
</dbReference>
<dbReference type="GO" id="GO:0005730">
    <property type="term" value="C:nucleolus"/>
    <property type="evidence" value="ECO:0007669"/>
    <property type="project" value="UniProtKB-SubCell"/>
</dbReference>
<dbReference type="GO" id="GO:0003723">
    <property type="term" value="F:RNA binding"/>
    <property type="evidence" value="ECO:0000318"/>
    <property type="project" value="GO_Central"/>
</dbReference>
<dbReference type="GO" id="GO:0071034">
    <property type="term" value="P:CUT catabolic process"/>
    <property type="evidence" value="ECO:0000318"/>
    <property type="project" value="GO_Central"/>
</dbReference>
<dbReference type="GO" id="GO:0000467">
    <property type="term" value="P:exonucleolytic trimming to generate mature 3'-end of 5.8S rRNA from tricistronic rRNA transcript (SSU-rRNA, 5.8S rRNA, LSU-rRNA)"/>
    <property type="evidence" value="ECO:0000318"/>
    <property type="project" value="GO_Central"/>
</dbReference>
<dbReference type="GO" id="GO:0070651">
    <property type="term" value="P:nonfunctional rRNA decay"/>
    <property type="evidence" value="ECO:0000266"/>
    <property type="project" value="PomBase"/>
</dbReference>
<dbReference type="GO" id="GO:0071028">
    <property type="term" value="P:nuclear mRNA surveillance"/>
    <property type="evidence" value="ECO:0000304"/>
    <property type="project" value="PomBase"/>
</dbReference>
<dbReference type="GO" id="GO:0071042">
    <property type="term" value="P:nuclear polyadenylation-dependent mRNA catabolic process"/>
    <property type="evidence" value="ECO:0000266"/>
    <property type="project" value="PomBase"/>
</dbReference>
<dbReference type="GO" id="GO:0071035">
    <property type="term" value="P:nuclear polyadenylation-dependent rRNA catabolic process"/>
    <property type="evidence" value="ECO:0000318"/>
    <property type="project" value="GO_Central"/>
</dbReference>
<dbReference type="GO" id="GO:0000956">
    <property type="term" value="P:nuclear-transcribed mRNA catabolic process"/>
    <property type="evidence" value="ECO:0000318"/>
    <property type="project" value="GO_Central"/>
</dbReference>
<dbReference type="GO" id="GO:0070478">
    <property type="term" value="P:nuclear-transcribed mRNA catabolic process, 3'-5' exonucleolytic nonsense-mediated decay"/>
    <property type="evidence" value="ECO:0000266"/>
    <property type="project" value="PomBase"/>
</dbReference>
<dbReference type="GO" id="GO:0070481">
    <property type="term" value="P:nuclear-transcribed mRNA catabolic process, non-stop decay"/>
    <property type="evidence" value="ECO:0000266"/>
    <property type="project" value="PomBase"/>
</dbReference>
<dbReference type="GO" id="GO:0071051">
    <property type="term" value="P:poly(A)-dependent snoRNA 3'-end processing"/>
    <property type="evidence" value="ECO:0000318"/>
    <property type="project" value="GO_Central"/>
</dbReference>
<dbReference type="GO" id="GO:0071038">
    <property type="term" value="P:TRAMP-dependent tRNA surveillance pathway"/>
    <property type="evidence" value="ECO:0000318"/>
    <property type="project" value="GO_Central"/>
</dbReference>
<dbReference type="GO" id="GO:0034475">
    <property type="term" value="P:U4 snRNA 3'-end processing"/>
    <property type="evidence" value="ECO:0000318"/>
    <property type="project" value="GO_Central"/>
</dbReference>
<dbReference type="CDD" id="cd22526">
    <property type="entry name" value="KH-I_Rrp40"/>
    <property type="match status" value="1"/>
</dbReference>
<dbReference type="CDD" id="cd05790">
    <property type="entry name" value="S1_Rrp40"/>
    <property type="match status" value="1"/>
</dbReference>
<dbReference type="FunFam" id="2.40.50.140:FF:000112">
    <property type="entry name" value="Exosome complex component RRP40"/>
    <property type="match status" value="1"/>
</dbReference>
<dbReference type="FunFam" id="3.30.1370.10:FF:000038">
    <property type="entry name" value="exosome complex component RRP40"/>
    <property type="match status" value="1"/>
</dbReference>
<dbReference type="Gene3D" id="2.40.50.100">
    <property type="match status" value="1"/>
</dbReference>
<dbReference type="Gene3D" id="3.30.1370.10">
    <property type="entry name" value="K Homology domain, type 1"/>
    <property type="match status" value="1"/>
</dbReference>
<dbReference type="Gene3D" id="2.40.50.140">
    <property type="entry name" value="Nucleic acid-binding proteins"/>
    <property type="match status" value="1"/>
</dbReference>
<dbReference type="InterPro" id="IPR026699">
    <property type="entry name" value="Exosome_RNA_bind1/RRP40/RRP4"/>
</dbReference>
<dbReference type="InterPro" id="IPR004088">
    <property type="entry name" value="KH_dom_type_1"/>
</dbReference>
<dbReference type="InterPro" id="IPR036612">
    <property type="entry name" value="KH_dom_type_1_sf"/>
</dbReference>
<dbReference type="InterPro" id="IPR012340">
    <property type="entry name" value="NA-bd_OB-fold"/>
</dbReference>
<dbReference type="InterPro" id="IPR049469">
    <property type="entry name" value="RRP40_KH-I"/>
</dbReference>
<dbReference type="InterPro" id="IPR041054">
    <property type="entry name" value="Rrp40_N_euk"/>
</dbReference>
<dbReference type="InterPro" id="IPR037319">
    <property type="entry name" value="Rrp40_S1"/>
</dbReference>
<dbReference type="PANTHER" id="PTHR21321:SF1">
    <property type="entry name" value="EXOSOME COMPLEX COMPONENT RRP40"/>
    <property type="match status" value="1"/>
</dbReference>
<dbReference type="PANTHER" id="PTHR21321">
    <property type="entry name" value="PNAS-3 RELATED"/>
    <property type="match status" value="1"/>
</dbReference>
<dbReference type="Pfam" id="PF15985">
    <property type="entry name" value="KH_6"/>
    <property type="match status" value="1"/>
</dbReference>
<dbReference type="Pfam" id="PF18311">
    <property type="entry name" value="Rrp40_N"/>
    <property type="match status" value="1"/>
</dbReference>
<dbReference type="Pfam" id="PF21262">
    <property type="entry name" value="RRP40_S1"/>
    <property type="match status" value="1"/>
</dbReference>
<dbReference type="SUPFAM" id="SSF54791">
    <property type="entry name" value="Eukaryotic type KH-domain (KH-domain type I)"/>
    <property type="match status" value="1"/>
</dbReference>
<dbReference type="SUPFAM" id="SSF50249">
    <property type="entry name" value="Nucleic acid-binding proteins"/>
    <property type="match status" value="1"/>
</dbReference>
<keyword id="KW-0963">Cytoplasm</keyword>
<keyword id="KW-0271">Exosome</keyword>
<keyword id="KW-0539">Nucleus</keyword>
<keyword id="KW-1185">Reference proteome</keyword>
<keyword id="KW-0694">RNA-binding</keyword>
<keyword id="KW-0698">rRNA processing</keyword>
<protein>
    <recommendedName>
        <fullName>Exosome complex component rrp40</fullName>
    </recommendedName>
    <alternativeName>
        <fullName>Ribosomal RNA-processing protein 40</fullName>
    </alternativeName>
</protein>
<reference key="1">
    <citation type="journal article" date="2002" name="Nature">
        <title>The genome sequence of Schizosaccharomyces pombe.</title>
        <authorList>
            <person name="Wood V."/>
            <person name="Gwilliam R."/>
            <person name="Rajandream M.A."/>
            <person name="Lyne M.H."/>
            <person name="Lyne R."/>
            <person name="Stewart A."/>
            <person name="Sgouros J.G."/>
            <person name="Peat N."/>
            <person name="Hayles J."/>
            <person name="Baker S.G."/>
            <person name="Basham D."/>
            <person name="Bowman S."/>
            <person name="Brooks K."/>
            <person name="Brown D."/>
            <person name="Brown S."/>
            <person name="Chillingworth T."/>
            <person name="Churcher C.M."/>
            <person name="Collins M."/>
            <person name="Connor R."/>
            <person name="Cronin A."/>
            <person name="Davis P."/>
            <person name="Feltwell T."/>
            <person name="Fraser A."/>
            <person name="Gentles S."/>
            <person name="Goble A."/>
            <person name="Hamlin N."/>
            <person name="Harris D.E."/>
            <person name="Hidalgo J."/>
            <person name="Hodgson G."/>
            <person name="Holroyd S."/>
            <person name="Hornsby T."/>
            <person name="Howarth S."/>
            <person name="Huckle E.J."/>
            <person name="Hunt S."/>
            <person name="Jagels K."/>
            <person name="James K.D."/>
            <person name="Jones L."/>
            <person name="Jones M."/>
            <person name="Leather S."/>
            <person name="McDonald S."/>
            <person name="McLean J."/>
            <person name="Mooney P."/>
            <person name="Moule S."/>
            <person name="Mungall K.L."/>
            <person name="Murphy L.D."/>
            <person name="Niblett D."/>
            <person name="Odell C."/>
            <person name="Oliver K."/>
            <person name="O'Neil S."/>
            <person name="Pearson D."/>
            <person name="Quail M.A."/>
            <person name="Rabbinowitsch E."/>
            <person name="Rutherford K.M."/>
            <person name="Rutter S."/>
            <person name="Saunders D."/>
            <person name="Seeger K."/>
            <person name="Sharp S."/>
            <person name="Skelton J."/>
            <person name="Simmonds M.N."/>
            <person name="Squares R."/>
            <person name="Squares S."/>
            <person name="Stevens K."/>
            <person name="Taylor K."/>
            <person name="Taylor R.G."/>
            <person name="Tivey A."/>
            <person name="Walsh S.V."/>
            <person name="Warren T."/>
            <person name="Whitehead S."/>
            <person name="Woodward J.R."/>
            <person name="Volckaert G."/>
            <person name="Aert R."/>
            <person name="Robben J."/>
            <person name="Grymonprez B."/>
            <person name="Weltjens I."/>
            <person name="Vanstreels E."/>
            <person name="Rieger M."/>
            <person name="Schaefer M."/>
            <person name="Mueller-Auer S."/>
            <person name="Gabel C."/>
            <person name="Fuchs M."/>
            <person name="Duesterhoeft A."/>
            <person name="Fritzc C."/>
            <person name="Holzer E."/>
            <person name="Moestl D."/>
            <person name="Hilbert H."/>
            <person name="Borzym K."/>
            <person name="Langer I."/>
            <person name="Beck A."/>
            <person name="Lehrach H."/>
            <person name="Reinhardt R."/>
            <person name="Pohl T.M."/>
            <person name="Eger P."/>
            <person name="Zimmermann W."/>
            <person name="Wedler H."/>
            <person name="Wambutt R."/>
            <person name="Purnelle B."/>
            <person name="Goffeau A."/>
            <person name="Cadieu E."/>
            <person name="Dreano S."/>
            <person name="Gloux S."/>
            <person name="Lelaure V."/>
            <person name="Mottier S."/>
            <person name="Galibert F."/>
            <person name="Aves S.J."/>
            <person name="Xiang Z."/>
            <person name="Hunt C."/>
            <person name="Moore K."/>
            <person name="Hurst S.M."/>
            <person name="Lucas M."/>
            <person name="Rochet M."/>
            <person name="Gaillardin C."/>
            <person name="Tallada V.A."/>
            <person name="Garzon A."/>
            <person name="Thode G."/>
            <person name="Daga R.R."/>
            <person name="Cruzado L."/>
            <person name="Jimenez J."/>
            <person name="Sanchez M."/>
            <person name="del Rey F."/>
            <person name="Benito J."/>
            <person name="Dominguez A."/>
            <person name="Revuelta J.L."/>
            <person name="Moreno S."/>
            <person name="Armstrong J."/>
            <person name="Forsburg S.L."/>
            <person name="Cerutti L."/>
            <person name="Lowe T."/>
            <person name="McCombie W.R."/>
            <person name="Paulsen I."/>
            <person name="Potashkin J."/>
            <person name="Shpakovski G.V."/>
            <person name="Ussery D."/>
            <person name="Barrell B.G."/>
            <person name="Nurse P."/>
        </authorList>
    </citation>
    <scope>NUCLEOTIDE SEQUENCE [LARGE SCALE GENOMIC DNA]</scope>
    <source>
        <strain>972 / ATCC 24843</strain>
    </source>
</reference>